<protein>
    <recommendedName>
        <fullName>Cadmium, zinc and cobalt-transporting ATPase</fullName>
        <ecNumber>7.2.2.12</ecNumber>
        <ecNumber>7.2.2.21</ecNumber>
    </recommendedName>
</protein>
<dbReference type="EC" id="7.2.2.12"/>
<dbReference type="EC" id="7.2.2.21"/>
<dbReference type="EMBL" id="AF125316">
    <property type="protein sequence ID" value="AAF12735.1"/>
    <property type="molecule type" value="Genomic_DNA"/>
</dbReference>
<dbReference type="SMR" id="Q9RQB4"/>
<dbReference type="OMA" id="SFDEWIY"/>
<dbReference type="GO" id="GO:0005886">
    <property type="term" value="C:plasma membrane"/>
    <property type="evidence" value="ECO:0007669"/>
    <property type="project" value="UniProtKB-SubCell"/>
</dbReference>
<dbReference type="GO" id="GO:0005524">
    <property type="term" value="F:ATP binding"/>
    <property type="evidence" value="ECO:0007669"/>
    <property type="project" value="UniProtKB-KW"/>
</dbReference>
<dbReference type="GO" id="GO:0016887">
    <property type="term" value="F:ATP hydrolysis activity"/>
    <property type="evidence" value="ECO:0007669"/>
    <property type="project" value="InterPro"/>
</dbReference>
<dbReference type="GO" id="GO:0046872">
    <property type="term" value="F:metal ion binding"/>
    <property type="evidence" value="ECO:0007669"/>
    <property type="project" value="UniProtKB-KW"/>
</dbReference>
<dbReference type="GO" id="GO:0008551">
    <property type="term" value="F:P-type cadmium transporter activity"/>
    <property type="evidence" value="ECO:0007669"/>
    <property type="project" value="UniProtKB-EC"/>
</dbReference>
<dbReference type="GO" id="GO:0016463">
    <property type="term" value="F:P-type zinc transporter activity"/>
    <property type="evidence" value="ECO:0007669"/>
    <property type="project" value="UniProtKB-EC"/>
</dbReference>
<dbReference type="GO" id="GO:0006824">
    <property type="term" value="P:cobalt ion transport"/>
    <property type="evidence" value="ECO:0007669"/>
    <property type="project" value="UniProtKB-KW"/>
</dbReference>
<dbReference type="GO" id="GO:0006825">
    <property type="term" value="P:copper ion transport"/>
    <property type="evidence" value="ECO:0007669"/>
    <property type="project" value="UniProtKB-KW"/>
</dbReference>
<dbReference type="CDD" id="cd07548">
    <property type="entry name" value="P-type_ATPase-Cd_Zn_Co_like"/>
    <property type="match status" value="1"/>
</dbReference>
<dbReference type="FunFam" id="2.70.150.10:FF:000002">
    <property type="entry name" value="Copper-transporting ATPase 1, putative"/>
    <property type="match status" value="1"/>
</dbReference>
<dbReference type="Gene3D" id="3.30.70.100">
    <property type="match status" value="1"/>
</dbReference>
<dbReference type="Gene3D" id="3.40.1110.10">
    <property type="entry name" value="Calcium-transporting ATPase, cytoplasmic domain N"/>
    <property type="match status" value="1"/>
</dbReference>
<dbReference type="Gene3D" id="2.70.150.10">
    <property type="entry name" value="Calcium-transporting ATPase, cytoplasmic transduction domain A"/>
    <property type="match status" value="1"/>
</dbReference>
<dbReference type="Gene3D" id="3.40.50.1000">
    <property type="entry name" value="HAD superfamily/HAD-like"/>
    <property type="match status" value="1"/>
</dbReference>
<dbReference type="InterPro" id="IPR023299">
    <property type="entry name" value="ATPase_P-typ_cyto_dom_N"/>
</dbReference>
<dbReference type="InterPro" id="IPR023298">
    <property type="entry name" value="ATPase_P-typ_TM_dom_sf"/>
</dbReference>
<dbReference type="InterPro" id="IPR008250">
    <property type="entry name" value="ATPase_P-typ_transduc_dom_A_sf"/>
</dbReference>
<dbReference type="InterPro" id="IPR051014">
    <property type="entry name" value="Cation_Transport_ATPase_IB"/>
</dbReference>
<dbReference type="InterPro" id="IPR036412">
    <property type="entry name" value="HAD-like_sf"/>
</dbReference>
<dbReference type="InterPro" id="IPR023214">
    <property type="entry name" value="HAD_sf"/>
</dbReference>
<dbReference type="InterPro" id="IPR006121">
    <property type="entry name" value="HMA_dom"/>
</dbReference>
<dbReference type="InterPro" id="IPR036163">
    <property type="entry name" value="HMA_dom_sf"/>
</dbReference>
<dbReference type="InterPro" id="IPR027256">
    <property type="entry name" value="P-typ_ATPase_IB"/>
</dbReference>
<dbReference type="InterPro" id="IPR001757">
    <property type="entry name" value="P_typ_ATPase"/>
</dbReference>
<dbReference type="InterPro" id="IPR044492">
    <property type="entry name" value="P_typ_ATPase_HD_dom"/>
</dbReference>
<dbReference type="NCBIfam" id="TIGR01512">
    <property type="entry name" value="ATPase-IB2_Cd"/>
    <property type="match status" value="1"/>
</dbReference>
<dbReference type="NCBIfam" id="TIGR01525">
    <property type="entry name" value="ATPase-IB_hvy"/>
    <property type="match status" value="1"/>
</dbReference>
<dbReference type="NCBIfam" id="TIGR01494">
    <property type="entry name" value="ATPase_P-type"/>
    <property type="match status" value="1"/>
</dbReference>
<dbReference type="PANTHER" id="PTHR48085">
    <property type="entry name" value="CADMIUM/ZINC-TRANSPORTING ATPASE HMA2-RELATED"/>
    <property type="match status" value="1"/>
</dbReference>
<dbReference type="PANTHER" id="PTHR48085:SF5">
    <property type="entry name" value="CADMIUM_ZINC-TRANSPORTING ATPASE HMA4-RELATED"/>
    <property type="match status" value="1"/>
</dbReference>
<dbReference type="Pfam" id="PF00122">
    <property type="entry name" value="E1-E2_ATPase"/>
    <property type="match status" value="1"/>
</dbReference>
<dbReference type="Pfam" id="PF00702">
    <property type="entry name" value="Hydrolase"/>
    <property type="match status" value="1"/>
</dbReference>
<dbReference type="PRINTS" id="PR00119">
    <property type="entry name" value="CATATPASE"/>
</dbReference>
<dbReference type="PRINTS" id="PR00941">
    <property type="entry name" value="CDATPASE"/>
</dbReference>
<dbReference type="SFLD" id="SFLDS00003">
    <property type="entry name" value="Haloacid_Dehalogenase"/>
    <property type="match status" value="1"/>
</dbReference>
<dbReference type="SFLD" id="SFLDF00027">
    <property type="entry name" value="p-type_atpase"/>
    <property type="match status" value="1"/>
</dbReference>
<dbReference type="SUPFAM" id="SSF81653">
    <property type="entry name" value="Calcium ATPase, transduction domain A"/>
    <property type="match status" value="1"/>
</dbReference>
<dbReference type="SUPFAM" id="SSF81665">
    <property type="entry name" value="Calcium ATPase, transmembrane domain M"/>
    <property type="match status" value="1"/>
</dbReference>
<dbReference type="SUPFAM" id="SSF56784">
    <property type="entry name" value="HAD-like"/>
    <property type="match status" value="1"/>
</dbReference>
<dbReference type="SUPFAM" id="SSF55008">
    <property type="entry name" value="HMA, heavy metal-associated domain"/>
    <property type="match status" value="1"/>
</dbReference>
<dbReference type="PROSITE" id="PS50846">
    <property type="entry name" value="HMA_2"/>
    <property type="match status" value="1"/>
</dbReference>
<comment type="function">
    <text evidence="1">Couples the hydrolysis of ATP with the transport of cadmium, zinc and cobalt out of the cell.</text>
</comment>
<comment type="catalytic activity">
    <reaction>
        <text>Zn(2+)(in) + ATP + H2O = Zn(2+)(out) + ADP + phosphate + H(+)</text>
        <dbReference type="Rhea" id="RHEA:20621"/>
        <dbReference type="ChEBI" id="CHEBI:15377"/>
        <dbReference type="ChEBI" id="CHEBI:15378"/>
        <dbReference type="ChEBI" id="CHEBI:29105"/>
        <dbReference type="ChEBI" id="CHEBI:30616"/>
        <dbReference type="ChEBI" id="CHEBI:43474"/>
        <dbReference type="ChEBI" id="CHEBI:456216"/>
        <dbReference type="EC" id="7.2.2.12"/>
    </reaction>
</comment>
<comment type="catalytic activity">
    <reaction>
        <text>Cd(2+)(in) + ATP + H2O = Cd(2+)(out) + ADP + phosphate + H(+)</text>
        <dbReference type="Rhea" id="RHEA:12132"/>
        <dbReference type="ChEBI" id="CHEBI:15377"/>
        <dbReference type="ChEBI" id="CHEBI:15378"/>
        <dbReference type="ChEBI" id="CHEBI:30616"/>
        <dbReference type="ChEBI" id="CHEBI:43474"/>
        <dbReference type="ChEBI" id="CHEBI:48775"/>
        <dbReference type="ChEBI" id="CHEBI:456216"/>
        <dbReference type="EC" id="7.2.2.21"/>
    </reaction>
</comment>
<comment type="subcellular location">
    <subcellularLocation>
        <location>Cell membrane</location>
        <topology>Multi-pass membrane protein</topology>
    </subcellularLocation>
</comment>
<comment type="similarity">
    <text evidence="3">Belongs to the cation transport ATPase (P-type) (TC 3.A.3) family. Type IB subfamily.</text>
</comment>
<gene>
    <name type="primary">cadA</name>
</gene>
<keyword id="KW-0067">ATP-binding</keyword>
<keyword id="KW-0104">Cadmium</keyword>
<keyword id="KW-1003">Cell membrane</keyword>
<keyword id="KW-0170">Cobalt</keyword>
<keyword id="KW-0171">Cobalt transport</keyword>
<keyword id="KW-0186">Copper</keyword>
<keyword id="KW-0187">Copper transport</keyword>
<keyword id="KW-0406">Ion transport</keyword>
<keyword id="KW-0460">Magnesium</keyword>
<keyword id="KW-0472">Membrane</keyword>
<keyword id="KW-0479">Metal-binding</keyword>
<keyword id="KW-0547">Nucleotide-binding</keyword>
<keyword id="KW-0597">Phosphoprotein</keyword>
<keyword id="KW-1278">Translocase</keyword>
<keyword id="KW-0812">Transmembrane</keyword>
<keyword id="KW-1133">Transmembrane helix</keyword>
<keyword id="KW-0813">Transport</keyword>
<keyword id="KW-0862">Zinc</keyword>
<keyword id="KW-0864">Zinc transport</keyword>
<organism>
    <name type="scientific">Helicobacter felis</name>
    <dbReference type="NCBI Taxonomy" id="214"/>
    <lineage>
        <taxon>Bacteria</taxon>
        <taxon>Pseudomonadati</taxon>
        <taxon>Campylobacterota</taxon>
        <taxon>Epsilonproteobacteria</taxon>
        <taxon>Campylobacterales</taxon>
        <taxon>Helicobacteraceae</taxon>
        <taxon>Helicobacter</taxon>
    </lineage>
</organism>
<evidence type="ECO:0000250" key="1"/>
<evidence type="ECO:0000255" key="2">
    <source>
        <dbReference type="PROSITE-ProRule" id="PRU00280"/>
    </source>
</evidence>
<evidence type="ECO:0000305" key="3"/>
<sequence length="681" mass="73748">MQKYHFTGLDCPDCANKLESALNKQSYVQEARVVFNTNTLYLKTQDMPKALALIKQLEPDMELSEQVQSEAKPSAIPLLLSVVLYLIAVATIHFSAQNWALHLSYALLAGVYLVAGKDVFLGALRAIRNKQFFDENTLMLSATIAAFGVGAHEEAVSIMVFYSAGEFLQQLAIARSKQSLHALLDVAPNHAVRKVGQELQEVEPSALAIGDVVIVKVGEKIPTDGVVLRGESLLDQKALTGESLPVNVKEHSAVLGGSINLKGVLEIQVSKLYADSSVAKIVDLVSNAVSQKSQTEKFITTFARYYTPAVFAIALLIALVPPLLGHGDFDTWIYRGLFALMVSCPCALVISVPLGYFGGVGAASRAGILIKSVQTLEALSQVKNIAFDKTGTLSKGEFNVIDVVPIAPFSKEDVLQHATCAQILSTHPIAISIQKAYKRQCQHEVKDYQEIGGLGVQASCHSHLIIAGNDKMLHKYNIPHDTCSLEGTIVHVAVDGKHIGYIVVADTLKDNAKECLDGLKHAGIEHMCILSGDHEYSTKRVAKELDCPYYANLLPEDKLNAFKDFQAQHAHKSMFVGDGINDAPTLARADVSMSMGSASQISKESADIVITNNSLESVLKVFKIAKKTKRIIIENIIFALAIKAMFIVLGLSGDASLWEAVLGDVGVTLIALANSMRTMRI</sequence>
<feature type="chain" id="PRO_0000046175" description="Cadmium, zinc and cobalt-transporting ATPase">
    <location>
        <begin position="1"/>
        <end position="681"/>
    </location>
</feature>
<feature type="topological domain" description="Cytoplasmic" evidence="1">
    <location>
        <begin position="1"/>
        <end position="72"/>
    </location>
</feature>
<feature type="transmembrane region" description="Helical; Name=1" evidence="1">
    <location>
        <begin position="73"/>
        <end position="92"/>
    </location>
</feature>
<feature type="topological domain" description="Extracellular" evidence="1">
    <location>
        <begin position="93"/>
        <end position="102"/>
    </location>
</feature>
<feature type="transmembrane region" description="Helical; Name=2" evidence="1">
    <location>
        <begin position="103"/>
        <end position="124"/>
    </location>
</feature>
<feature type="topological domain" description="Cytoplasmic" evidence="1">
    <location>
        <begin position="125"/>
        <end position="131"/>
    </location>
</feature>
<feature type="transmembrane region" description="Helical; Name=3" evidence="1">
    <location>
        <begin position="132"/>
        <end position="151"/>
    </location>
</feature>
<feature type="topological domain" description="Extracellular" evidence="1">
    <location>
        <begin position="152"/>
        <end position="154"/>
    </location>
</feature>
<feature type="transmembrane region" description="Helical; Name=4" evidence="1">
    <location>
        <begin position="155"/>
        <end position="174"/>
    </location>
</feature>
<feature type="topological domain" description="Cytoplasmic" evidence="1">
    <location>
        <begin position="175"/>
        <end position="308"/>
    </location>
</feature>
<feature type="transmembrane region" description="Helical; Name=5" evidence="1">
    <location>
        <begin position="309"/>
        <end position="327"/>
    </location>
</feature>
<feature type="topological domain" description="Extracellular" evidence="1">
    <location>
        <begin position="328"/>
        <end position="332"/>
    </location>
</feature>
<feature type="transmembrane region" description="Helical; Name=6" evidence="1">
    <location>
        <begin position="333"/>
        <end position="350"/>
    </location>
</feature>
<feature type="topological domain" description="Cytoplasmic" evidence="1">
    <location>
        <begin position="351"/>
        <end position="630"/>
    </location>
</feature>
<feature type="transmembrane region" description="Helical; Name=7" evidence="1">
    <location>
        <begin position="631"/>
        <end position="652"/>
    </location>
</feature>
<feature type="topological domain" description="Extracellular" evidence="1">
    <location>
        <begin position="653"/>
        <end position="660"/>
    </location>
</feature>
<feature type="transmembrane region" description="Helical; Name=8" evidence="1">
    <location>
        <begin position="661"/>
        <end position="676"/>
    </location>
</feature>
<feature type="topological domain" description="Cytoplasmic" evidence="1">
    <location>
        <begin position="677"/>
        <end position="681"/>
    </location>
</feature>
<feature type="domain" description="HMA" evidence="2">
    <location>
        <begin position="1"/>
        <end position="66"/>
    </location>
</feature>
<feature type="active site" description="4-aspartylphosphate intermediate" evidence="1">
    <location>
        <position position="388"/>
    </location>
</feature>
<feature type="binding site" evidence="2">
    <location>
        <position position="11"/>
    </location>
    <ligand>
        <name>Cd(2+)</name>
        <dbReference type="ChEBI" id="CHEBI:48775"/>
    </ligand>
</feature>
<feature type="binding site" evidence="2">
    <location>
        <position position="11"/>
    </location>
    <ligand>
        <name>Co(2+)</name>
        <dbReference type="ChEBI" id="CHEBI:48828"/>
    </ligand>
</feature>
<feature type="binding site" evidence="2">
    <location>
        <position position="11"/>
    </location>
    <ligand>
        <name>Zn(2+)</name>
        <dbReference type="ChEBI" id="CHEBI:29105"/>
    </ligand>
</feature>
<feature type="binding site" evidence="2">
    <location>
        <position position="14"/>
    </location>
    <ligand>
        <name>Cd(2+)</name>
        <dbReference type="ChEBI" id="CHEBI:48775"/>
    </ligand>
</feature>
<feature type="binding site" evidence="2">
    <location>
        <position position="14"/>
    </location>
    <ligand>
        <name>Co(2+)</name>
        <dbReference type="ChEBI" id="CHEBI:48828"/>
    </ligand>
</feature>
<feature type="binding site" evidence="2">
    <location>
        <position position="14"/>
    </location>
    <ligand>
        <name>Zn(2+)</name>
        <dbReference type="ChEBI" id="CHEBI:29105"/>
    </ligand>
</feature>
<feature type="binding site">
    <location>
        <position position="578"/>
    </location>
    <ligand>
        <name>Mg(2+)</name>
        <dbReference type="ChEBI" id="CHEBI:18420"/>
    </ligand>
</feature>
<feature type="binding site">
    <location>
        <position position="582"/>
    </location>
    <ligand>
        <name>Mg(2+)</name>
        <dbReference type="ChEBI" id="CHEBI:18420"/>
    </ligand>
</feature>
<reference key="1">
    <citation type="journal article" date="1999" name="Res. Microbiol.">
        <title>Membrane topology of CadA homologous P-type ATPase of Helicobacter pylori as determined by expression of phoA fusions in Escherichia coli and the positive inside rule.</title>
        <authorList>
            <person name="Melchers K."/>
            <person name="Schuhmacher A."/>
            <person name="Buhmann A."/>
            <person name="Weitzenegger T."/>
            <person name="Belin D."/>
            <person name="Grau S."/>
            <person name="Ehrmann M."/>
        </authorList>
    </citation>
    <scope>NUCLEOTIDE SEQUENCE [GENOMIC DNA]</scope>
</reference>
<proteinExistence type="inferred from homology"/>
<accession>Q9RQB4</accession>
<name>HMCT_HELFE</name>